<proteinExistence type="evidence at protein level"/>
<feature type="chain" id="PRO_0000257844" description="Neurite extension and migration factor">
    <location>
        <begin position="1"/>
        <end position="1516"/>
    </location>
</feature>
<feature type="region of interest" description="Disordered" evidence="3">
    <location>
        <begin position="380"/>
        <end position="440"/>
    </location>
</feature>
<feature type="region of interest" description="Disordered" evidence="3">
    <location>
        <begin position="589"/>
        <end position="610"/>
    </location>
</feature>
<feature type="region of interest" description="Disordered" evidence="3">
    <location>
        <begin position="1158"/>
        <end position="1225"/>
    </location>
</feature>
<feature type="region of interest" description="Disordered" evidence="3">
    <location>
        <begin position="1373"/>
        <end position="1419"/>
    </location>
</feature>
<feature type="region of interest" description="Disordered" evidence="3">
    <location>
        <begin position="1437"/>
        <end position="1479"/>
    </location>
</feature>
<feature type="compositionally biased region" description="Basic and acidic residues" evidence="3">
    <location>
        <begin position="380"/>
        <end position="405"/>
    </location>
</feature>
<feature type="compositionally biased region" description="Polar residues" evidence="3">
    <location>
        <begin position="596"/>
        <end position="610"/>
    </location>
</feature>
<feature type="compositionally biased region" description="Polar residues" evidence="3">
    <location>
        <begin position="1158"/>
        <end position="1170"/>
    </location>
</feature>
<feature type="compositionally biased region" description="Polar residues" evidence="3">
    <location>
        <begin position="1185"/>
        <end position="1194"/>
    </location>
</feature>
<feature type="compositionally biased region" description="Basic residues" evidence="3">
    <location>
        <begin position="1443"/>
        <end position="1453"/>
    </location>
</feature>
<feature type="compositionally biased region" description="Basic and acidic residues" evidence="3">
    <location>
        <begin position="1456"/>
        <end position="1479"/>
    </location>
</feature>
<feature type="sequence variant" id="VAR_079039" description="In XLID98; de novo dominant mutation found in females; disease phenotype includes epilepsy as a feature." evidence="9 10">
    <location>
        <begin position="146"/>
        <end position="1516"/>
    </location>
</feature>
<feature type="sequence variant" id="VAR_079040" description="In XLID98; de novo dominant mutation found in females; disease phenotype includes epilepsy as a feature." evidence="9">
    <location>
        <begin position="218"/>
        <end position="1516"/>
    </location>
</feature>
<feature type="sequence variant" id="VAR_079041" description="In XLID98; de novo dominant mutation found in females; disease phenotype includes epilepsy as a feature." evidence="9 10">
    <location>
        <begin position="318"/>
        <end position="1516"/>
    </location>
</feature>
<feature type="sequence variant" id="VAR_079042" description="In XLID98; de novo dominant mutation found in females; disease phenotype includes epilepsy as a feature." evidence="7 9 10">
    <location>
        <begin position="322"/>
        <end position="1516"/>
    </location>
</feature>
<feature type="sequence variant" id="VAR_079043" description="In XLID98; de novo dominant mutation found in females; disease phenotype includes epilepsy as a feature." evidence="9 10">
    <location>
        <begin position="481"/>
        <end position="1516"/>
    </location>
</feature>
<feature type="sequence variant" id="VAR_079044" description="In XLID98; de novo dominant mutation found in females; disease phenotype includes epilepsy as a feature." evidence="9 10">
    <location>
        <begin position="628"/>
        <end position="1516"/>
    </location>
</feature>
<feature type="sequence variant" id="VAR_079045" description="In XLID98." evidence="7">
    <location>
        <begin position="705"/>
        <end position="1516"/>
    </location>
</feature>
<feature type="sequence variant" id="VAR_049529" description="In dbSNP:rs12851763.">
    <original>I</original>
    <variation>T</variation>
    <location>
        <position position="1112"/>
    </location>
</feature>
<accession>Q5QGS0</accession>
<accession>A7YY87</accession>
<accession>Q5JUX9</accession>
<accession>Q8IVE9</accession>
<sequence length="1516" mass="167551">MDNQQDKAIVASANGENTLINGVKENDSEDQDVAMKSFAALEAAAPIQPTPVAQKETLMYPRGLLPLPSKKPCMQSPPSPLGLIEAPEHAANSASVNAISLTSGIAKGLNTWSLPNECEKAPFAIMEPAGMSALNGDCLMQPSRTCLGCFMESKDAVDPEPGISLKVGDLNRDYETCAVSDIGIQCINAGENMKYGEQLLSDQLLGFPLHKSRAGDRRETEKPDIDLEDPAQKSYYEALLLDKCNTEEALLANSNQDWGYFETFISESKIELLDLCSKNELSVNLFSEEDVDNYMFDDDESTLGSDVCSLKIRYESFQDNVRDKTTLLMQEDAQFNFFPSVFTTCPKRESKSGALKQSSDFSQFKVPDVSIIWGEEDKNLDKKKGKEEGQEDKGVEKKDGKDNGEKPALNKPCSGTEVEQLKNPKQGHLANSLETSGSFSDDSSFIEISYDAMGEIKDCSRYMARDTNSGSSSSQQNYGLRAKRKVRYSEDYLYDVDSLEGEKVNERKEWLPVGSKEEDDDEWCPKKRRKVTRKEPPVIIKYIIINRFKGEKNMLVKLGKVDASETTVNLSENQLNKYAKLAPLKGFWQKKKKQRNTNTDSIKTPFSQKQSFEPGSFEVSFLPPARKRKSKLGNRHRIQRIPSIEISASSKQISLCNDQRHASNHKEDGGLKGTLKSAPLGAPSCANGSHLNDITGPDSVKVKAQDTEFKGPERKVLNKIKFKSEARLKSKKVKAAGQESKPIVQMSPLLENQSSKANLKNEVIPGTSNSSRLSEFHEAKAAKSSTFLPTTCSSEMPLSSANVTTNIPVIPGGYLQTLLDASDLSNNTSISYFSHHSPEQNEGSLTQTEKSFVPLQPTQDCVLTSSSDSELQQSSHNFKMESSNYRNVWPNKATSGTQEFMAEVSREIAPTQSSEFGASQVVSMENNLTPTTYNPICLNSGGSNCNKVLYDSMQDTQLPSDDSYQLCHFNNGEICFPFQQGPVNMDDGRLFSFDSMAPLSVSSSNYCSLSLKSCEKDGDDDITDDFLAHCSPKLVIQQSIDEIAPLKESTDLLDISNFTPDKFRHSSLSEMSPPDTPSLSPQITRCESMKTLGTLKGFQEGVPGPLDSVEKIKWDCSTLSRQVQMEDGFTLNNHQFQFHMFNDEDSVSLLQKNPCLSTFNDPSGQISTNNKVSKSRKKSSPSKSGAMNQSSSQKNTRKKSLKGNNKGIEKPPGKNSRQVPKSTKKGKYMAAINGEKMQIGIGRGGSQTNTISSTGKTLAECIQHGGPMASMKMPSQKGLSGDWALGKESSPGWSDMSMGTNTNSLLDDDQREFQEPSYILSNIASGMADVQRFMMASIEPLWEPMEHHGDPNIFYSPESNSLKLKTLKILAGTPQESKKKINSGSQGATKNHRSIKGVSKSNGKTAIGDPGRANMPGYNEDSRSTFFDKKYSNMSTLGNNGPTHKKLYRHKSSSKALRDEKCKGKHMEREQVHKDESGTASFEKLRDSDYNLLKAETTFWVLPVFEEETRIFQKDI</sequence>
<reference key="1">
    <citation type="journal article" date="2004" name="J. Med. Genet.">
        <title>Disruption of a new X linked gene highly expressed in brain in a family with two mentally retarded males.</title>
        <authorList>
            <person name="Cantagrel V."/>
            <person name="Lossi A.-M."/>
            <person name="Boulanger S."/>
            <person name="Depetris D."/>
            <person name="Mattei M.-G."/>
            <person name="Gecz J."/>
            <person name="Schwartz C.E."/>
            <person name="Van Maldergem L."/>
            <person name="Villard L."/>
        </authorList>
    </citation>
    <scope>NUCLEOTIDE SEQUENCE [MRNA]</scope>
    <scope>INVOLVEMENT IN XLID98</scope>
    <scope>TISSUE SPECIFICITY</scope>
    <scope>CHROMOSOMAL REARRANGEMENT</scope>
</reference>
<reference key="2">
    <citation type="submission" date="2002-11" db="EMBL/GenBank/DDBJ databases">
        <title>The nucleotide sequence of a long cDNA clone isolated from human.</title>
        <authorList>
            <person name="Nagase T."/>
            <person name="Kikuno R."/>
            <person name="Ohara O."/>
        </authorList>
    </citation>
    <scope>NUCLEOTIDE SEQUENCE [LARGE SCALE MRNA]</scope>
    <source>
        <tissue>Brain</tissue>
    </source>
</reference>
<reference key="3">
    <citation type="journal article" date="2005" name="Nature">
        <title>The DNA sequence of the human X chromosome.</title>
        <authorList>
            <person name="Ross M.T."/>
            <person name="Grafham D.V."/>
            <person name="Coffey A.J."/>
            <person name="Scherer S."/>
            <person name="McLay K."/>
            <person name="Muzny D."/>
            <person name="Platzer M."/>
            <person name="Howell G.R."/>
            <person name="Burrows C."/>
            <person name="Bird C.P."/>
            <person name="Frankish A."/>
            <person name="Lovell F.L."/>
            <person name="Howe K.L."/>
            <person name="Ashurst J.L."/>
            <person name="Fulton R.S."/>
            <person name="Sudbrak R."/>
            <person name="Wen G."/>
            <person name="Jones M.C."/>
            <person name="Hurles M.E."/>
            <person name="Andrews T.D."/>
            <person name="Scott C.E."/>
            <person name="Searle S."/>
            <person name="Ramser J."/>
            <person name="Whittaker A."/>
            <person name="Deadman R."/>
            <person name="Carter N.P."/>
            <person name="Hunt S.E."/>
            <person name="Chen R."/>
            <person name="Cree A."/>
            <person name="Gunaratne P."/>
            <person name="Havlak P."/>
            <person name="Hodgson A."/>
            <person name="Metzker M.L."/>
            <person name="Richards S."/>
            <person name="Scott G."/>
            <person name="Steffen D."/>
            <person name="Sodergren E."/>
            <person name="Wheeler D.A."/>
            <person name="Worley K.C."/>
            <person name="Ainscough R."/>
            <person name="Ambrose K.D."/>
            <person name="Ansari-Lari M.A."/>
            <person name="Aradhya S."/>
            <person name="Ashwell R.I."/>
            <person name="Babbage A.K."/>
            <person name="Bagguley C.L."/>
            <person name="Ballabio A."/>
            <person name="Banerjee R."/>
            <person name="Barker G.E."/>
            <person name="Barlow K.F."/>
            <person name="Barrett I.P."/>
            <person name="Bates K.N."/>
            <person name="Beare D.M."/>
            <person name="Beasley H."/>
            <person name="Beasley O."/>
            <person name="Beck A."/>
            <person name="Bethel G."/>
            <person name="Blechschmidt K."/>
            <person name="Brady N."/>
            <person name="Bray-Allen S."/>
            <person name="Bridgeman A.M."/>
            <person name="Brown A.J."/>
            <person name="Brown M.J."/>
            <person name="Bonnin D."/>
            <person name="Bruford E.A."/>
            <person name="Buhay C."/>
            <person name="Burch P."/>
            <person name="Burford D."/>
            <person name="Burgess J."/>
            <person name="Burrill W."/>
            <person name="Burton J."/>
            <person name="Bye J.M."/>
            <person name="Carder C."/>
            <person name="Carrel L."/>
            <person name="Chako J."/>
            <person name="Chapman J.C."/>
            <person name="Chavez D."/>
            <person name="Chen E."/>
            <person name="Chen G."/>
            <person name="Chen Y."/>
            <person name="Chen Z."/>
            <person name="Chinault C."/>
            <person name="Ciccodicola A."/>
            <person name="Clark S.Y."/>
            <person name="Clarke G."/>
            <person name="Clee C.M."/>
            <person name="Clegg S."/>
            <person name="Clerc-Blankenburg K."/>
            <person name="Clifford K."/>
            <person name="Cobley V."/>
            <person name="Cole C.G."/>
            <person name="Conquer J.S."/>
            <person name="Corby N."/>
            <person name="Connor R.E."/>
            <person name="David R."/>
            <person name="Davies J."/>
            <person name="Davis C."/>
            <person name="Davis J."/>
            <person name="Delgado O."/>
            <person name="Deshazo D."/>
            <person name="Dhami P."/>
            <person name="Ding Y."/>
            <person name="Dinh H."/>
            <person name="Dodsworth S."/>
            <person name="Draper H."/>
            <person name="Dugan-Rocha S."/>
            <person name="Dunham A."/>
            <person name="Dunn M."/>
            <person name="Durbin K.J."/>
            <person name="Dutta I."/>
            <person name="Eades T."/>
            <person name="Ellwood M."/>
            <person name="Emery-Cohen A."/>
            <person name="Errington H."/>
            <person name="Evans K.L."/>
            <person name="Faulkner L."/>
            <person name="Francis F."/>
            <person name="Frankland J."/>
            <person name="Fraser A.E."/>
            <person name="Galgoczy P."/>
            <person name="Gilbert J."/>
            <person name="Gill R."/>
            <person name="Gloeckner G."/>
            <person name="Gregory S.G."/>
            <person name="Gribble S."/>
            <person name="Griffiths C."/>
            <person name="Grocock R."/>
            <person name="Gu Y."/>
            <person name="Gwilliam R."/>
            <person name="Hamilton C."/>
            <person name="Hart E.A."/>
            <person name="Hawes A."/>
            <person name="Heath P.D."/>
            <person name="Heitmann K."/>
            <person name="Hennig S."/>
            <person name="Hernandez J."/>
            <person name="Hinzmann B."/>
            <person name="Ho S."/>
            <person name="Hoffs M."/>
            <person name="Howden P.J."/>
            <person name="Huckle E.J."/>
            <person name="Hume J."/>
            <person name="Hunt P.J."/>
            <person name="Hunt A.R."/>
            <person name="Isherwood J."/>
            <person name="Jacob L."/>
            <person name="Johnson D."/>
            <person name="Jones S."/>
            <person name="de Jong P.J."/>
            <person name="Joseph S.S."/>
            <person name="Keenan S."/>
            <person name="Kelly S."/>
            <person name="Kershaw J.K."/>
            <person name="Khan Z."/>
            <person name="Kioschis P."/>
            <person name="Klages S."/>
            <person name="Knights A.J."/>
            <person name="Kosiura A."/>
            <person name="Kovar-Smith C."/>
            <person name="Laird G.K."/>
            <person name="Langford C."/>
            <person name="Lawlor S."/>
            <person name="Leversha M."/>
            <person name="Lewis L."/>
            <person name="Liu W."/>
            <person name="Lloyd C."/>
            <person name="Lloyd D.M."/>
            <person name="Loulseged H."/>
            <person name="Loveland J.E."/>
            <person name="Lovell J.D."/>
            <person name="Lozado R."/>
            <person name="Lu J."/>
            <person name="Lyne R."/>
            <person name="Ma J."/>
            <person name="Maheshwari M."/>
            <person name="Matthews L.H."/>
            <person name="McDowall J."/>
            <person name="McLaren S."/>
            <person name="McMurray A."/>
            <person name="Meidl P."/>
            <person name="Meitinger T."/>
            <person name="Milne S."/>
            <person name="Miner G."/>
            <person name="Mistry S.L."/>
            <person name="Morgan M."/>
            <person name="Morris S."/>
            <person name="Mueller I."/>
            <person name="Mullikin J.C."/>
            <person name="Nguyen N."/>
            <person name="Nordsiek G."/>
            <person name="Nyakatura G."/>
            <person name="O'dell C.N."/>
            <person name="Okwuonu G."/>
            <person name="Palmer S."/>
            <person name="Pandian R."/>
            <person name="Parker D."/>
            <person name="Parrish J."/>
            <person name="Pasternak S."/>
            <person name="Patel D."/>
            <person name="Pearce A.V."/>
            <person name="Pearson D.M."/>
            <person name="Pelan S.E."/>
            <person name="Perez L."/>
            <person name="Porter K.M."/>
            <person name="Ramsey Y."/>
            <person name="Reichwald K."/>
            <person name="Rhodes S."/>
            <person name="Ridler K.A."/>
            <person name="Schlessinger D."/>
            <person name="Schueler M.G."/>
            <person name="Sehra H.K."/>
            <person name="Shaw-Smith C."/>
            <person name="Shen H."/>
            <person name="Sheridan E.M."/>
            <person name="Shownkeen R."/>
            <person name="Skuce C.D."/>
            <person name="Smith M.L."/>
            <person name="Sotheran E.C."/>
            <person name="Steingruber H.E."/>
            <person name="Steward C.A."/>
            <person name="Storey R."/>
            <person name="Swann R.M."/>
            <person name="Swarbreck D."/>
            <person name="Tabor P.E."/>
            <person name="Taudien S."/>
            <person name="Taylor T."/>
            <person name="Teague B."/>
            <person name="Thomas K."/>
            <person name="Thorpe A."/>
            <person name="Timms K."/>
            <person name="Tracey A."/>
            <person name="Trevanion S."/>
            <person name="Tromans A.C."/>
            <person name="d'Urso M."/>
            <person name="Verduzco D."/>
            <person name="Villasana D."/>
            <person name="Waldron L."/>
            <person name="Wall M."/>
            <person name="Wang Q."/>
            <person name="Warren J."/>
            <person name="Warry G.L."/>
            <person name="Wei X."/>
            <person name="West A."/>
            <person name="Whitehead S.L."/>
            <person name="Whiteley M.N."/>
            <person name="Wilkinson J.E."/>
            <person name="Willey D.L."/>
            <person name="Williams G."/>
            <person name="Williams L."/>
            <person name="Williamson A."/>
            <person name="Williamson H."/>
            <person name="Wilming L."/>
            <person name="Woodmansey R.L."/>
            <person name="Wray P.W."/>
            <person name="Yen J."/>
            <person name="Zhang J."/>
            <person name="Zhou J."/>
            <person name="Zoghbi H."/>
            <person name="Zorilla S."/>
            <person name="Buck D."/>
            <person name="Reinhardt R."/>
            <person name="Poustka A."/>
            <person name="Rosenthal A."/>
            <person name="Lehrach H."/>
            <person name="Meindl A."/>
            <person name="Minx P.J."/>
            <person name="Hillier L.W."/>
            <person name="Willard H.F."/>
            <person name="Wilson R.K."/>
            <person name="Waterston R.H."/>
            <person name="Rice C.M."/>
            <person name="Vaudin M."/>
            <person name="Coulson A."/>
            <person name="Nelson D.L."/>
            <person name="Weinstock G."/>
            <person name="Sulston J.E."/>
            <person name="Durbin R.M."/>
            <person name="Hubbard T."/>
            <person name="Gibbs R.A."/>
            <person name="Beck S."/>
            <person name="Rogers J."/>
            <person name="Bentley D.R."/>
        </authorList>
    </citation>
    <scope>NUCLEOTIDE SEQUENCE [LARGE SCALE GENOMIC DNA]</scope>
</reference>
<reference key="4">
    <citation type="journal article" date="2004" name="Genome Res.">
        <title>The status, quality, and expansion of the NIH full-length cDNA project: the Mammalian Gene Collection (MGC).</title>
        <authorList>
            <consortium name="The MGC Project Team"/>
        </authorList>
    </citation>
    <scope>NUCLEOTIDE SEQUENCE [LARGE SCALE MRNA]</scope>
</reference>
<reference key="5">
    <citation type="journal article" date="2013" name="Hum. Mol. Genet.">
        <title>Loss of function of KIAA2022 causes mild to severe intellectual disability with an autism spectrum disorder and impairs neurite outgrowth.</title>
        <authorList>
            <person name="Van Maldergem L."/>
            <person name="Hou Q."/>
            <person name="Kalscheuer V.M."/>
            <person name="Rio M."/>
            <person name="Doco-Fenzy M."/>
            <person name="Medeira A."/>
            <person name="de Brouwer A.P."/>
            <person name="Cabrol C."/>
            <person name="Haas S.A."/>
            <person name="Cacciagli P."/>
            <person name="Moutton S."/>
            <person name="Landais E."/>
            <person name="Motte J."/>
            <person name="Colleaux L."/>
            <person name="Bonnet C."/>
            <person name="Villard L."/>
            <person name="Dupont J."/>
            <person name="Man H.Y."/>
        </authorList>
    </citation>
    <scope>INVOLVEMENT IN XLID98</scope>
    <scope>CHROMOSOMAL REARRANGEMENT</scope>
</reference>
<reference key="6">
    <citation type="journal article" date="2013" name="Neurochem. Int.">
        <title>XLMR protein related to neurite extension (Xpn/KIAA2022) regulates cell-cell and cell-matrix adhesion and migration.</title>
        <authorList>
            <person name="Magome T."/>
            <person name="Hattori T."/>
            <person name="Taniguchi M."/>
            <person name="Ishikawa T."/>
            <person name="Miyata S."/>
            <person name="Yamada K."/>
            <person name="Takamura H."/>
            <person name="Matsuzaki S."/>
            <person name="Ito A."/>
            <person name="Tohyama M."/>
            <person name="Katayama T."/>
        </authorList>
    </citation>
    <scope>SUBCELLULAR LOCATION</scope>
</reference>
<reference key="7">
    <citation type="journal article" date="2016" name="Am. J. Med. Genet. A">
        <title>KIAA2022 nonsense mutation in a symptomatic female.</title>
        <authorList>
            <person name="Farach L.S."/>
            <person name="Northrup H."/>
        </authorList>
    </citation>
    <scope>INVOLVEMENT IN XLID98</scope>
</reference>
<reference key="8">
    <citation type="journal article" date="2015" name="Am. J. Med. Genet. A">
        <title>Delineation of the KIAA2022 mutation phenotype: two patients with X-linked intellectual disability and distinctive features.</title>
        <authorList>
            <person name="Kuroda Y."/>
            <person name="Ohashi I."/>
            <person name="Naruto T."/>
            <person name="Ida K."/>
            <person name="Enomoto Y."/>
            <person name="Saito T."/>
            <person name="Nagai J."/>
            <person name="Wada T."/>
            <person name="Kurosawa K."/>
        </authorList>
    </citation>
    <scope>VARIANTS XLID98 322-ARG--ILE-1516 DEL AND 705-GLN--ILE-1516 DEL</scope>
</reference>
<reference key="9">
    <citation type="journal article" date="2016" name="J. Med. Genet.">
        <title>De novo mutations of KIAA2022 in females cause intellectual disability and intractable epilepsy.</title>
        <authorList>
            <consortium name="EuroEPINOMICS-RES MAE working group"/>
            <person name="de Lange I.M."/>
            <person name="Helbig K.L."/>
            <person name="Weckhuysen S."/>
            <person name="Moeller R.S."/>
            <person name="Velinov M."/>
            <person name="Dolzhanskaya N."/>
            <person name="Marsh E."/>
            <person name="Helbig I."/>
            <person name="Devinsky O."/>
            <person name="Tang S."/>
            <person name="Mefford H.C."/>
            <person name="Myers C.T."/>
            <person name="van Paesschen W."/>
            <person name="Striano P."/>
            <person name="van Gassen K."/>
            <person name="van Kempen M."/>
            <person name="de Kovel C.G."/>
            <person name="Piard J."/>
            <person name="Minassian B.A."/>
            <person name="Nezarati M.M."/>
            <person name="Pessoa A."/>
            <person name="Jacquette A."/>
            <person name="Maher B."/>
            <person name="Balestrini S."/>
            <person name="Sisodiya S."/>
            <person name="Warde M.T."/>
            <person name="De St Martin A."/>
            <person name="Chelly J."/>
            <person name="van 't Slot R."/>
            <person name="Van Maldergem L."/>
            <person name="Brilstra E.H."/>
            <person name="Koeleman B.P."/>
        </authorList>
    </citation>
    <scope>VARIANTS XLID98 146-CYS--ILE-1516 DEL; 218-ARG--ILE-1516 DEL; 318-GLN--ILE-1516 DEL; 322-ARG--ILE-1516 DEL; 481-ARG--ILE-1516 DEL AND 628-ARG--ILE-1516 DEL</scope>
</reference>
<reference key="10">
    <citation type="journal article" date="2017" name="Clin. Genet.">
        <title>De novo loss of function mutations in KIAA2022 are associated with epilepsy and neurodevelopmental delay in females.</title>
        <authorList>
            <person name="Webster R."/>
            <person name="Cho M.T."/>
            <person name="Retterer K."/>
            <person name="Millan F."/>
            <person name="Nowak C."/>
            <person name="Douglas J."/>
            <person name="Ahmad A."/>
            <person name="Raymond G.V."/>
            <person name="Johnson M.R."/>
            <person name="Pujol A."/>
            <person name="Begtrup A."/>
            <person name="McKnight D."/>
            <person name="Devinsky O."/>
            <person name="Chung W.K."/>
        </authorList>
    </citation>
    <scope>VARIANTS XLID98 146-CYS--ILE-1516 DEL; 318-GLN--ILE-1516 DEL; 322-ARG--ILE-1516 DEL; 481-ARG--ILE-1516 DEL AND 628-ARG--ILE-1516 DEL</scope>
</reference>
<gene>
    <name evidence="13" type="primary">NEXMIF</name>
    <name evidence="13" type="synonym">KIAA2022</name>
</gene>
<keyword id="KW-0160">Chromosomal rearrangement</keyword>
<keyword id="KW-0963">Cytoplasm</keyword>
<keyword id="KW-0217">Developmental protein</keyword>
<keyword id="KW-0225">Disease variant</keyword>
<keyword id="KW-0991">Intellectual disability</keyword>
<keyword id="KW-0524">Neurogenesis</keyword>
<keyword id="KW-0539">Nucleus</keyword>
<keyword id="KW-1267">Proteomics identification</keyword>
<keyword id="KW-1185">Reference proteome</keyword>
<keyword id="KW-0804">Transcription</keyword>
<keyword id="KW-0805">Transcription regulation</keyword>
<name>NEXMI_HUMAN</name>
<comment type="function">
    <text evidence="1">Involved in neurite outgrowth by regulating cell-cell adhesion via the N-cadherin signaling pathway. May act by regulating expression of protein-coding genes, such as N-cadherins and integrin beta-1 (ITGB1).</text>
</comment>
<comment type="subcellular location">
    <subcellularLocation>
        <location evidence="6">Nucleus</location>
    </subcellularLocation>
    <subcellularLocation>
        <location evidence="2">Cytoplasm</location>
    </subcellularLocation>
</comment>
<comment type="tissue specificity">
    <text evidence="4">Highly expressed in fetal and adult brain, predominantly in the cerebral cortex and the cerebellum. Also expressed in other tissues but to a lesser extent.</text>
</comment>
<comment type="disease" evidence="4 5 7 8 9 10">
    <disease id="DI-03949">
        <name>Intellectual developmental disorder, X-linked 98</name>
        <acronym>XLID98</acronym>
        <description>A disorder characterized by significantly below average general intellectual functioning associated with impairments in adaptive behavior and manifested during the developmental period. XLID98 patients show delayed psychomotor development, absent or poor speech development, and postnatal growth retardation, often with microcephaly. Some patients show autistic behavioral features, such as stereotypic hand movements and repetitive behaviors. Additional, more variable features include spasticity, axial hypotonia, seizures, drooling, gastroesophageal reflux, and lack of sphincter control.</description>
        <dbReference type="MIM" id="300912"/>
    </disease>
    <text evidence="4 5 8 9 10">The disease is caused by variants affecting the gene represented in this entry. A chromosomal aberration involving NEXMIF is found in patients with severe intellectual disability. Pericentric inversion inv(X)(p22.3;q13.2) with P2RY8 leading to inactivation of NEXMIF (PubMed:15466006). XLID98 transmission pattern is consistent with X-linked recessive inheritance (PubMed:23615299). In some cases, de novo heterozygous loss-of-function mutations have been found in affected females, while some female carriers are asymptomatic (PubMed:26576034, PubMed:27358180, PubMed:27568816). The female phenotype partially overlaps with the reported male phenotype but includes epilepsy as a relevant feature. The variability of disease manifestation in female carriers is probably due to skewed X inactivation with differential expression in the brain (PubMed:26576034, PubMed:27358180, PubMed:27568816).</text>
</comment>
<comment type="sequence caution" evidence="12">
    <conflict type="erroneous initiation">
        <sequence resource="EMBL-CDS" id="BAC23118"/>
    </conflict>
</comment>
<organism>
    <name type="scientific">Homo sapiens</name>
    <name type="common">Human</name>
    <dbReference type="NCBI Taxonomy" id="9606"/>
    <lineage>
        <taxon>Eukaryota</taxon>
        <taxon>Metazoa</taxon>
        <taxon>Chordata</taxon>
        <taxon>Craniata</taxon>
        <taxon>Vertebrata</taxon>
        <taxon>Euteleostomi</taxon>
        <taxon>Mammalia</taxon>
        <taxon>Eutheria</taxon>
        <taxon>Euarchontoglires</taxon>
        <taxon>Primates</taxon>
        <taxon>Haplorrhini</taxon>
        <taxon>Catarrhini</taxon>
        <taxon>Hominidae</taxon>
        <taxon>Homo</taxon>
    </lineage>
</organism>
<protein>
    <recommendedName>
        <fullName evidence="12">Neurite extension and migration factor</fullName>
    </recommendedName>
    <alternativeName>
        <fullName evidence="11">XLMR protein related to neurite extension</fullName>
        <shortName evidence="11">XPN</shortName>
    </alternativeName>
</protein>
<dbReference type="EMBL" id="AY563507">
    <property type="protein sequence ID" value="AAT67985.1"/>
    <property type="molecule type" value="mRNA"/>
</dbReference>
<dbReference type="EMBL" id="AB095942">
    <property type="protein sequence ID" value="BAC23118.1"/>
    <property type="status" value="ALT_INIT"/>
    <property type="molecule type" value="mRNA"/>
</dbReference>
<dbReference type="EMBL" id="AL139395">
    <property type="status" value="NOT_ANNOTATED_CDS"/>
    <property type="molecule type" value="Genomic_DNA"/>
</dbReference>
<dbReference type="EMBL" id="AL390035">
    <property type="status" value="NOT_ANNOTATED_CDS"/>
    <property type="molecule type" value="Genomic_DNA"/>
</dbReference>
<dbReference type="EMBL" id="BC152557">
    <property type="protein sequence ID" value="AAI52558.1"/>
    <property type="molecule type" value="mRNA"/>
</dbReference>
<dbReference type="CCDS" id="CCDS35337.1"/>
<dbReference type="RefSeq" id="NP_001008537.1">
    <property type="nucleotide sequence ID" value="NM_001008537.3"/>
</dbReference>
<dbReference type="BioGRID" id="131068">
    <property type="interactions" value="7"/>
</dbReference>
<dbReference type="FunCoup" id="Q5QGS0">
    <property type="interactions" value="349"/>
</dbReference>
<dbReference type="IntAct" id="Q5QGS0">
    <property type="interactions" value="1"/>
</dbReference>
<dbReference type="STRING" id="9606.ENSP00000055682"/>
<dbReference type="GlyGen" id="Q5QGS0">
    <property type="glycosylation" value="1 site"/>
</dbReference>
<dbReference type="iPTMnet" id="Q5QGS0"/>
<dbReference type="PhosphoSitePlus" id="Q5QGS0"/>
<dbReference type="BioMuta" id="NEXMIF"/>
<dbReference type="DMDM" id="74743104"/>
<dbReference type="jPOST" id="Q5QGS0"/>
<dbReference type="MassIVE" id="Q5QGS0"/>
<dbReference type="PaxDb" id="9606-ENSP00000055682"/>
<dbReference type="PeptideAtlas" id="Q5QGS0"/>
<dbReference type="ProteomicsDB" id="63609"/>
<dbReference type="Antibodypedia" id="405">
    <property type="antibodies" value="9 antibodies from 7 providers"/>
</dbReference>
<dbReference type="DNASU" id="340533"/>
<dbReference type="Ensembl" id="ENST00000055682.12">
    <property type="protein sequence ID" value="ENSP00000055682.5"/>
    <property type="gene ID" value="ENSG00000050030.16"/>
</dbReference>
<dbReference type="Ensembl" id="ENST00000616200.2">
    <property type="protein sequence ID" value="ENSP00000480284.1"/>
    <property type="gene ID" value="ENSG00000050030.16"/>
</dbReference>
<dbReference type="GeneID" id="340533"/>
<dbReference type="KEGG" id="hsa:340533"/>
<dbReference type="MANE-Select" id="ENST00000055682.12">
    <property type="protein sequence ID" value="ENSP00000055682.5"/>
    <property type="RefSeq nucleotide sequence ID" value="NM_001008537.3"/>
    <property type="RefSeq protein sequence ID" value="NP_001008537.1"/>
</dbReference>
<dbReference type="UCSC" id="uc004eby.4">
    <property type="organism name" value="human"/>
</dbReference>
<dbReference type="AGR" id="HGNC:29433"/>
<dbReference type="CTD" id="340533"/>
<dbReference type="DisGeNET" id="340533"/>
<dbReference type="GeneCards" id="NEXMIF"/>
<dbReference type="HGNC" id="HGNC:29433">
    <property type="gene designation" value="NEXMIF"/>
</dbReference>
<dbReference type="HPA" id="ENSG00000050030">
    <property type="expression patterns" value="Tissue enhanced (brain)"/>
</dbReference>
<dbReference type="MalaCards" id="NEXMIF"/>
<dbReference type="MIM" id="300524">
    <property type="type" value="gene"/>
</dbReference>
<dbReference type="MIM" id="300912">
    <property type="type" value="phenotype"/>
</dbReference>
<dbReference type="neXtProt" id="NX_Q5QGS0"/>
<dbReference type="OpenTargets" id="ENSG00000050030"/>
<dbReference type="Orphanet" id="1942">
    <property type="disease" value="Epilepsy with myoclonic-atonic seizures"/>
</dbReference>
<dbReference type="Orphanet" id="85277">
    <property type="disease" value="X-linked intellectual disability, Cantagrel type"/>
</dbReference>
<dbReference type="PharmGKB" id="PA162393214"/>
<dbReference type="VEuPathDB" id="HostDB:ENSG00000050030"/>
<dbReference type="eggNOG" id="ENOG502QUMY">
    <property type="taxonomic scope" value="Eukaryota"/>
</dbReference>
<dbReference type="GeneTree" id="ENSGT00940000159746"/>
<dbReference type="HOGENOM" id="CLU_250004_0_0_1"/>
<dbReference type="InParanoid" id="Q5QGS0"/>
<dbReference type="OMA" id="ETHIFQK"/>
<dbReference type="OrthoDB" id="9878678at2759"/>
<dbReference type="PAN-GO" id="Q5QGS0">
    <property type="GO annotations" value="5 GO annotations based on evolutionary models"/>
</dbReference>
<dbReference type="PhylomeDB" id="Q5QGS0"/>
<dbReference type="TreeFam" id="TF332248"/>
<dbReference type="PathwayCommons" id="Q5QGS0"/>
<dbReference type="SIGNOR" id="Q5QGS0"/>
<dbReference type="BioGRID-ORCS" id="340533">
    <property type="hits" value="16 hits in 776 CRISPR screens"/>
</dbReference>
<dbReference type="ChiTaRS" id="KIAA2022">
    <property type="organism name" value="human"/>
</dbReference>
<dbReference type="GenomeRNAi" id="340533"/>
<dbReference type="Pharos" id="Q5QGS0">
    <property type="development level" value="Tbio"/>
</dbReference>
<dbReference type="PRO" id="PR:Q5QGS0"/>
<dbReference type="Proteomes" id="UP000005640">
    <property type="component" value="Chromosome X"/>
</dbReference>
<dbReference type="RNAct" id="Q5QGS0">
    <property type="molecule type" value="protein"/>
</dbReference>
<dbReference type="Bgee" id="ENSG00000050030">
    <property type="expression patterns" value="Expressed in endothelial cell and 135 other cell types or tissues"/>
</dbReference>
<dbReference type="ExpressionAtlas" id="Q5QGS0">
    <property type="expression patterns" value="baseline and differential"/>
</dbReference>
<dbReference type="GO" id="GO:0005829">
    <property type="term" value="C:cytosol"/>
    <property type="evidence" value="ECO:0000314"/>
    <property type="project" value="HPA"/>
</dbReference>
<dbReference type="GO" id="GO:0030496">
    <property type="term" value="C:midbody"/>
    <property type="evidence" value="ECO:0000314"/>
    <property type="project" value="HPA"/>
</dbReference>
<dbReference type="GO" id="GO:0005654">
    <property type="term" value="C:nucleoplasm"/>
    <property type="evidence" value="ECO:0000314"/>
    <property type="project" value="HPA"/>
</dbReference>
<dbReference type="GO" id="GO:0005634">
    <property type="term" value="C:nucleus"/>
    <property type="evidence" value="ECO:0000318"/>
    <property type="project" value="GO_Central"/>
</dbReference>
<dbReference type="GO" id="GO:0033629">
    <property type="term" value="P:negative regulation of cell adhesion mediated by integrin"/>
    <property type="evidence" value="ECO:0000318"/>
    <property type="project" value="GO_Central"/>
</dbReference>
<dbReference type="GO" id="GO:2000048">
    <property type="term" value="P:negative regulation of cell-cell adhesion mediated by cadherin"/>
    <property type="evidence" value="ECO:0000318"/>
    <property type="project" value="GO_Central"/>
</dbReference>
<dbReference type="GO" id="GO:0001953">
    <property type="term" value="P:negative regulation of cell-matrix adhesion"/>
    <property type="evidence" value="ECO:0000318"/>
    <property type="project" value="GO_Central"/>
</dbReference>
<dbReference type="GO" id="GO:2001223">
    <property type="term" value="P:negative regulation of neuron migration"/>
    <property type="evidence" value="ECO:0000318"/>
    <property type="project" value="GO_Central"/>
</dbReference>
<dbReference type="GO" id="GO:0007399">
    <property type="term" value="P:nervous system development"/>
    <property type="evidence" value="ECO:0007669"/>
    <property type="project" value="UniProtKB-KW"/>
</dbReference>
<dbReference type="InterPro" id="IPR032757">
    <property type="entry name" value="DUF4683"/>
</dbReference>
<dbReference type="InterPro" id="IPR042794">
    <property type="entry name" value="Nexmif"/>
</dbReference>
<dbReference type="PANTHER" id="PTHR46946">
    <property type="entry name" value="NEURITE EXTENSION AND MIGRATION FACTOR"/>
    <property type="match status" value="1"/>
</dbReference>
<dbReference type="PANTHER" id="PTHR46946:SF1">
    <property type="entry name" value="NEURITE EXTENSION AND MIGRATION FACTOR"/>
    <property type="match status" value="1"/>
</dbReference>
<dbReference type="Pfam" id="PF15735">
    <property type="entry name" value="DUF4683"/>
    <property type="match status" value="1"/>
</dbReference>
<evidence type="ECO:0000250" key="1">
    <source>
        <dbReference type="UniProtKB" id="D3ZGX1"/>
    </source>
</evidence>
<evidence type="ECO:0000250" key="2">
    <source>
        <dbReference type="UniProtKB" id="Q5DTT1"/>
    </source>
</evidence>
<evidence type="ECO:0000256" key="3">
    <source>
        <dbReference type="SAM" id="MobiDB-lite"/>
    </source>
</evidence>
<evidence type="ECO:0000269" key="4">
    <source>
    </source>
</evidence>
<evidence type="ECO:0000269" key="5">
    <source>
    </source>
</evidence>
<evidence type="ECO:0000269" key="6">
    <source>
    </source>
</evidence>
<evidence type="ECO:0000269" key="7">
    <source>
    </source>
</evidence>
<evidence type="ECO:0000269" key="8">
    <source>
    </source>
</evidence>
<evidence type="ECO:0000269" key="9">
    <source>
    </source>
</evidence>
<evidence type="ECO:0000269" key="10">
    <source>
    </source>
</evidence>
<evidence type="ECO:0000303" key="11">
    <source>
    </source>
</evidence>
<evidence type="ECO:0000305" key="12"/>
<evidence type="ECO:0000312" key="13">
    <source>
        <dbReference type="HGNC" id="HGNC:29433"/>
    </source>
</evidence>